<organism>
    <name type="scientific">Aspergillus terreus (strain NIH 2624 / FGSC A1156)</name>
    <dbReference type="NCBI Taxonomy" id="341663"/>
    <lineage>
        <taxon>Eukaryota</taxon>
        <taxon>Fungi</taxon>
        <taxon>Dikarya</taxon>
        <taxon>Ascomycota</taxon>
        <taxon>Pezizomycotina</taxon>
        <taxon>Eurotiomycetes</taxon>
        <taxon>Eurotiomycetidae</taxon>
        <taxon>Eurotiales</taxon>
        <taxon>Aspergillaceae</taxon>
        <taxon>Aspergillus</taxon>
        <taxon>Aspergillus subgen. Circumdati</taxon>
    </lineage>
</organism>
<keyword id="KW-0012">Acyltransferase</keyword>
<keyword id="KW-0378">Hydrolase</keyword>
<keyword id="KW-1185">Reference proteome</keyword>
<keyword id="KW-0808">Transferase</keyword>
<protein>
    <recommendedName>
        <fullName evidence="18">Monacolin J acid methylbutanoyltransferase</fullName>
        <ecNumber evidence="6 7 8">2.3.1.238</ecNumber>
    </recommendedName>
    <alternativeName>
        <fullName evidence="18">Lovastatin biosynthesis cluster protein D</fullName>
    </alternativeName>
    <alternativeName>
        <fullName>Lovastatin hydrolase</fullName>
    </alternativeName>
    <alternativeName>
        <fullName evidence="19">Simvastatin synthase LovD</fullName>
        <shortName evidence="19">SV synthase</shortName>
    </alternativeName>
</protein>
<dbReference type="EC" id="2.3.1.238" evidence="6 7 8"/>
<dbReference type="EMBL" id="CH476609">
    <property type="protein sequence ID" value="EAU29413.1"/>
    <property type="molecule type" value="Genomic_DNA"/>
</dbReference>
<dbReference type="RefSeq" id="XP_001209266.1">
    <property type="nucleotide sequence ID" value="XM_001209266.1"/>
</dbReference>
<dbReference type="SMR" id="Q0C8M0"/>
<dbReference type="STRING" id="341663.Q0C8M0"/>
<dbReference type="EnsemblFungi" id="EAU29413">
    <property type="protein sequence ID" value="EAU29413"/>
    <property type="gene ID" value="ATEG_09964"/>
</dbReference>
<dbReference type="GeneID" id="4319610"/>
<dbReference type="VEuPathDB" id="FungiDB:ATEG_09964"/>
<dbReference type="eggNOG" id="ENOG502S4UR">
    <property type="taxonomic scope" value="Eukaryota"/>
</dbReference>
<dbReference type="HOGENOM" id="CLU_020027_11_1_1"/>
<dbReference type="OMA" id="WAYSTGL"/>
<dbReference type="OrthoDB" id="428260at2759"/>
<dbReference type="UniPathway" id="UPA00875"/>
<dbReference type="Proteomes" id="UP000007963">
    <property type="component" value="Unassembled WGS sequence"/>
</dbReference>
<dbReference type="GO" id="GO:0016746">
    <property type="term" value="F:acyltransferase activity"/>
    <property type="evidence" value="ECO:0007669"/>
    <property type="project" value="UniProtKB-KW"/>
</dbReference>
<dbReference type="GO" id="GO:0016787">
    <property type="term" value="F:hydrolase activity"/>
    <property type="evidence" value="ECO:0007669"/>
    <property type="project" value="UniProtKB-KW"/>
</dbReference>
<dbReference type="GO" id="GO:0140735">
    <property type="term" value="P:lovastatin biosynthetic process"/>
    <property type="evidence" value="ECO:0000314"/>
    <property type="project" value="GO_Central"/>
</dbReference>
<dbReference type="FunFam" id="3.40.710.10:FF:000159">
    <property type="entry name" value="Monacolin J acid methylbutanoyltransferase"/>
    <property type="match status" value="1"/>
</dbReference>
<dbReference type="Gene3D" id="3.40.710.10">
    <property type="entry name" value="DD-peptidase/beta-lactamase superfamily"/>
    <property type="match status" value="1"/>
</dbReference>
<dbReference type="InterPro" id="IPR001466">
    <property type="entry name" value="Beta-lactam-related"/>
</dbReference>
<dbReference type="InterPro" id="IPR012338">
    <property type="entry name" value="Beta-lactam/transpept-like"/>
</dbReference>
<dbReference type="InterPro" id="IPR050789">
    <property type="entry name" value="Diverse_Enzym_Activities"/>
</dbReference>
<dbReference type="PANTHER" id="PTHR43283:SF17">
    <property type="entry name" value="(LOVD), PUTATIVE (AFU_ORTHOLOGUE AFUA_5G00920)-RELATED"/>
    <property type="match status" value="1"/>
</dbReference>
<dbReference type="PANTHER" id="PTHR43283">
    <property type="entry name" value="BETA-LACTAMASE-RELATED"/>
    <property type="match status" value="1"/>
</dbReference>
<dbReference type="Pfam" id="PF00144">
    <property type="entry name" value="Beta-lactamase"/>
    <property type="match status" value="1"/>
</dbReference>
<dbReference type="SUPFAM" id="SSF56601">
    <property type="entry name" value="beta-lactamase/transpeptidase-like"/>
    <property type="match status" value="1"/>
</dbReference>
<evidence type="ECO:0000250" key="1">
    <source>
        <dbReference type="UniProtKB" id="Q9Y7D1"/>
    </source>
</evidence>
<evidence type="ECO:0000269" key="2">
    <source>
    </source>
</evidence>
<evidence type="ECO:0000269" key="3">
    <source>
    </source>
</evidence>
<evidence type="ECO:0000269" key="4">
    <source>
    </source>
</evidence>
<evidence type="ECO:0000269" key="5">
    <source>
    </source>
</evidence>
<evidence type="ECO:0000269" key="6">
    <source>
    </source>
</evidence>
<evidence type="ECO:0000269" key="7">
    <source>
    </source>
</evidence>
<evidence type="ECO:0000269" key="8">
    <source>
    </source>
</evidence>
<evidence type="ECO:0000269" key="9">
    <source>
    </source>
</evidence>
<evidence type="ECO:0000269" key="10">
    <source>
    </source>
</evidence>
<evidence type="ECO:0000269" key="11">
    <source>
    </source>
</evidence>
<evidence type="ECO:0000269" key="12">
    <source>
    </source>
</evidence>
<evidence type="ECO:0000269" key="13">
    <source>
    </source>
</evidence>
<evidence type="ECO:0000269" key="14">
    <source>
    </source>
</evidence>
<evidence type="ECO:0000269" key="15">
    <source>
    </source>
</evidence>
<evidence type="ECO:0000269" key="16">
    <source>
    </source>
</evidence>
<evidence type="ECO:0000269" key="17">
    <source>
    </source>
</evidence>
<evidence type="ECO:0000303" key="18">
    <source>
    </source>
</evidence>
<evidence type="ECO:0000303" key="19">
    <source>
    </source>
</evidence>
<evidence type="ECO:0000305" key="20"/>
<evidence type="ECO:0000305" key="21">
    <source>
    </source>
</evidence>
<proteinExistence type="evidence at protein level"/>
<reference key="1">
    <citation type="submission" date="2005-09" db="EMBL/GenBank/DDBJ databases">
        <title>Annotation of the Aspergillus terreus NIH2624 genome.</title>
        <authorList>
            <person name="Birren B.W."/>
            <person name="Lander E.S."/>
            <person name="Galagan J.E."/>
            <person name="Nusbaum C."/>
            <person name="Devon K."/>
            <person name="Henn M."/>
            <person name="Ma L.-J."/>
            <person name="Jaffe D.B."/>
            <person name="Butler J."/>
            <person name="Alvarez P."/>
            <person name="Gnerre S."/>
            <person name="Grabherr M."/>
            <person name="Kleber M."/>
            <person name="Mauceli E.W."/>
            <person name="Brockman W."/>
            <person name="Rounsley S."/>
            <person name="Young S.K."/>
            <person name="LaButti K."/>
            <person name="Pushparaj V."/>
            <person name="DeCaprio D."/>
            <person name="Crawford M."/>
            <person name="Koehrsen M."/>
            <person name="Engels R."/>
            <person name="Montgomery P."/>
            <person name="Pearson M."/>
            <person name="Howarth C."/>
            <person name="Larson L."/>
            <person name="Luoma S."/>
            <person name="White J."/>
            <person name="Alvarado L."/>
            <person name="Kodira C.D."/>
            <person name="Zeng Q."/>
            <person name="Oleary S."/>
            <person name="Yandava C."/>
            <person name="Denning D.W."/>
            <person name="Nierman W.C."/>
            <person name="Milne T."/>
            <person name="Madden K."/>
        </authorList>
    </citation>
    <scope>NUCLEOTIDE SEQUENCE [LARGE SCALE GENOMIC DNA]</scope>
    <source>
        <strain>NIH 2624 / FGSC A1156</strain>
    </source>
</reference>
<reference key="2">
    <citation type="journal article" date="1980" name="Proc. Natl. Acad. Sci. U.S.A.">
        <title>Mevinolin: a highly potent competitive inhibitor of hydroxymethylglutaryl-coenzyme A reductase and a cholesterol-lowering agent.</title>
        <authorList>
            <person name="Alberts A.W."/>
            <person name="Chen J."/>
            <person name="Kuron G."/>
            <person name="Hunt V."/>
            <person name="Huff J."/>
            <person name="Hoffman C."/>
            <person name="Rothrock J."/>
            <person name="Lopez M."/>
            <person name="Joshua H."/>
            <person name="Harris E."/>
            <person name="Patchett A."/>
            <person name="Monaghan R."/>
            <person name="Currie S."/>
            <person name="Stapley E."/>
            <person name="Albers-Schonberg G."/>
            <person name="Hensens O."/>
            <person name="Hirshfield J."/>
            <person name="Hoogsteen K."/>
            <person name="Liesch J."/>
            <person name="Springer J."/>
        </authorList>
    </citation>
    <scope>BIOTECHNOLOGY</scope>
</reference>
<reference key="3">
    <citation type="journal article" date="1999" name="Chem. Biol.">
        <title>Lovastatin biosynthesis in Aspergillus terreus: characterization of blocked mutants, enzyme activities and a multifunctional polyketide synthase gene.</title>
        <authorList>
            <person name="Hendrickson L."/>
            <person name="Davis C.R."/>
            <person name="Roach C."/>
            <person name="Nguyen D.K."/>
            <person name="Aldrich T."/>
            <person name="McAda P.C."/>
            <person name="Reeves C.D."/>
        </authorList>
    </citation>
    <scope>FUNCTION</scope>
</reference>
<reference key="4">
    <citation type="journal article" date="1999" name="Science">
        <title>Modulation of polyketide synthase activity by accessory proteins during lovastatin biosynthesis.</title>
        <authorList>
            <person name="Kennedy J."/>
            <person name="Auclair K."/>
            <person name="Kendrew S.G."/>
            <person name="Park C."/>
            <person name="Vederas J.C."/>
            <person name="Hutchinson C.R."/>
        </authorList>
    </citation>
    <scope>FUNCTION</scope>
    <scope>PATHWAY</scope>
    <scope>DISRUPTION PHENOTYPE</scope>
    <scope>SUBUNIT</scope>
</reference>
<reference key="5">
    <citation type="journal article" date="2003" name="Org. Biomol. Chem.">
        <title>Transformations of cyclic nonaketides by Aspergillus terreus mutants blocked for lovastatin biosynthesis at the lovA and lovC genes.</title>
        <authorList>
            <person name="Sorensen J.L."/>
            <person name="Auclair K."/>
            <person name="Kennedy J."/>
            <person name="Hutchinson C.R."/>
            <person name="Vederas J.C."/>
        </authorList>
    </citation>
    <scope>FUNCTION</scope>
</reference>
<reference key="6">
    <citation type="journal article" date="2006" name="Chem. Biol.">
        <title>Biosynthesis of lovastatin analogs with a broadly specific acyltransferase.</title>
        <authorList>
            <person name="Xie X."/>
            <person name="Watanabe K."/>
            <person name="Wojcicki W.A."/>
            <person name="Wang C.C."/>
            <person name="Tang Y."/>
        </authorList>
    </citation>
    <scope>FUNCTION</scope>
    <scope>ACTIVE SITE</scope>
    <scope>BIOTECHNOLOGY</scope>
</reference>
<reference key="7">
    <citation type="journal article" date="2009" name="Chem. Biol.">
        <title>Directed evolution and structural characterization of a simvastatin synthase.</title>
        <authorList>
            <person name="Gao X."/>
            <person name="Xie X."/>
            <person name="Pashkov I."/>
            <person name="Sawaya M.R."/>
            <person name="Laidman J."/>
            <person name="Zhang W."/>
            <person name="Cacho R."/>
            <person name="Yeates T.O."/>
            <person name="Tang Y."/>
        </authorList>
    </citation>
    <scope>BIOTECHNOLOGY</scope>
    <scope>FUNCTION</scope>
    <scope>CATALYTIC ACTIVITY</scope>
    <scope>BIOPHYSICOCHEMICAL PROPERTIES</scope>
</reference>
<reference key="8">
    <citation type="journal article" date="2009" name="Biotechnol. Bioeng.">
        <title>Rational improvement of simvastatin synthase solubility in Escherichia coli leads to higher whole-cell biocatalytic activity.</title>
        <authorList>
            <person name="Xie X."/>
            <person name="Pashkov I."/>
            <person name="Gao X."/>
            <person name="Guerrero J.L."/>
            <person name="Yeates T.O."/>
            <person name="Tang Y."/>
        </authorList>
    </citation>
    <scope>FUNCTION</scope>
    <scope>CATALYTIC ACTIVITY</scope>
    <scope>BIOPHYSICOCHEMICAL PROPERTIES</scope>
</reference>
<reference key="9">
    <citation type="journal article" date="2009" name="J. Am. Chem. Soc.">
        <title>Acyltransferase mediated polyketide release from a fungal megasynthase.</title>
        <authorList>
            <person name="Xie X."/>
            <person name="Meehan M.J."/>
            <person name="Xu W."/>
            <person name="Dorrestein P.C."/>
            <person name="Tang Y."/>
        </authorList>
    </citation>
    <scope>FUNCTION</scope>
    <scope>CATALYTIC ACTIVITY</scope>
    <scope>INTERACTION WITH LOVF</scope>
</reference>
<reference key="10">
    <citation type="journal article" date="2009" name="Science">
        <title>Complete reconstitution of a highly reducing iterative polyketide synthase.</title>
        <authorList>
            <person name="Ma S.M."/>
            <person name="Li J.W."/>
            <person name="Choi J.W."/>
            <person name="Zhou H."/>
            <person name="Lee K.K."/>
            <person name="Moorthie V.A."/>
            <person name="Xie X."/>
            <person name="Kealey J.T."/>
            <person name="Da Silva N.A."/>
            <person name="Vederas J.C."/>
            <person name="Tang Y."/>
        </authorList>
    </citation>
    <scope>FUNCTION</scope>
</reference>
<reference key="11">
    <citation type="journal article" date="2011" name="Biochemistry">
        <title>FT-ICR-MS characterization of intermediates in the biosynthesis of the alpha-methylbutyrate side chain of lovastatin by the 277 kDa polyketide synthase LovF.</title>
        <authorList>
            <person name="Meehan M.J."/>
            <person name="Xie X."/>
            <person name="Zhao X."/>
            <person name="Xu W."/>
            <person name="Tang Y."/>
            <person name="Dorrestein P.C."/>
        </authorList>
    </citation>
    <scope>FUNCTION</scope>
</reference>
<reference key="12">
    <citation type="journal article" date="2011" name="J. Am. Chem. Soc.">
        <title>Double oxidation of the cyclic nonaketide dihydromonacolin L to monacolin J by a single cytochrome P450 monooxygenase, LovA.</title>
        <authorList>
            <person name="Barriuso J."/>
            <person name="Nguyen D.T."/>
            <person name="Li J.W."/>
            <person name="Roberts J.N."/>
            <person name="MacNevin G."/>
            <person name="Chaytor J.L."/>
            <person name="Marcus S.L."/>
            <person name="Vederas J.C."/>
            <person name="Ro D.K."/>
        </authorList>
    </citation>
    <scope>FUNCTION</scope>
</reference>
<reference key="13">
    <citation type="journal article" date="2012" name="Proc. Natl. Acad. Sci. U.S.A.">
        <title>Crystal structure and biochemical studies of the trans-acting polyketide enoyl reductase LovC from lovastatin biosynthesis.</title>
        <authorList>
            <person name="Ames B.D."/>
            <person name="Nguyen C."/>
            <person name="Bruegger J."/>
            <person name="Smith P."/>
            <person name="Xu W."/>
            <person name="Ma S."/>
            <person name="Wong E."/>
            <person name="Wong S."/>
            <person name="Xie X."/>
            <person name="Li J.W."/>
            <person name="Vederas J.C."/>
            <person name="Tang Y."/>
            <person name="Tsai S.C."/>
        </authorList>
    </citation>
    <scope>FUNCTION</scope>
</reference>
<reference key="14">
    <citation type="journal article" date="2013" name="Angew. Chem. Int. Ed. Engl.">
        <title>LovG: the thioesterase required for dihydromonacolin L release and lovastatin nonaketide synthase turnover in lovastatin biosynthesis.</title>
        <authorList>
            <person name="Xu W."/>
            <person name="Chooi Y.H."/>
            <person name="Choi J.W."/>
            <person name="Li S."/>
            <person name="Vederas J.C."/>
            <person name="Da Silva N.A."/>
            <person name="Tang Y."/>
        </authorList>
    </citation>
    <scope>FUNCTION</scope>
</reference>
<reference key="15">
    <citation type="journal article" date="2014" name="Nat. Chem. Biol.">
        <title>The role of distant mutations and allosteric regulation on LovD active site dynamics.</title>
        <authorList>
            <person name="Jimenez-Oses G."/>
            <person name="Osuna S."/>
            <person name="Gao X."/>
            <person name="Sawaya M.R."/>
            <person name="Gilson L."/>
            <person name="Collier S.J."/>
            <person name="Huisman G.W."/>
            <person name="Yeates T.O."/>
            <person name="Tang Y."/>
            <person name="Houk K.N."/>
        </authorList>
    </citation>
    <scope>FUNCTION</scope>
    <scope>PATHWAY</scope>
</reference>
<reference key="16">
    <citation type="journal article" date="2017" name="Int. J. Mol. Sci.">
        <title>Simvastatin inhibits cell proliferation and migration in human anaplastic thyroid cancer.</title>
        <authorList>
            <person name="Chen M.C."/>
            <person name="Tsai Y.C."/>
            <person name="Tseng J.H."/>
            <person name="Liou J.J."/>
            <person name="Horng S."/>
            <person name="Wen H.C."/>
            <person name="Fan Y.C."/>
            <person name="Zhong W.B."/>
            <person name="Hsu S.P."/>
        </authorList>
    </citation>
    <scope>BIOTECHNOLOGY</scope>
</reference>
<reference key="17">
    <citation type="journal article" date="2018" name="Int. J. Mol. Sci.">
        <title>A synergistic anti-cancer effect of troglitazone and lovastatin in a human anaplastic thyroid cancer cell line and in a mouse xenograft model.</title>
        <authorList>
            <person name="Zhong W.B."/>
            <person name="Tsai Y.C."/>
            <person name="Chin L.H."/>
            <person name="Tseng J.H."/>
            <person name="Tang L.W."/>
            <person name="Horng S."/>
            <person name="Fan Y.C."/>
            <person name="Hsu S.P."/>
        </authorList>
    </citation>
    <scope>BIOTECHNOLOGY</scope>
</reference>
<feature type="chain" id="PRO_0000449660" description="Monacolin J acid methylbutanoyltransferase">
    <location>
        <begin position="1"/>
        <end position="413"/>
    </location>
</feature>
<feature type="active site" description="Acyl-ester intermediate" evidence="1">
    <location>
        <position position="76"/>
    </location>
</feature>
<feature type="binding site" evidence="1">
    <location>
        <position position="73"/>
    </location>
    <ligand>
        <name>monacolin J</name>
        <dbReference type="ChEBI" id="CHEBI:79034"/>
    </ligand>
</feature>
<feature type="binding site" evidence="1">
    <location>
        <position position="173"/>
    </location>
    <ligand>
        <name>monacolin J</name>
        <dbReference type="ChEBI" id="CHEBI:79034"/>
    </ligand>
</feature>
<feature type="binding site" evidence="1">
    <location>
        <position position="188"/>
    </location>
    <ligand>
        <name>monacolin J</name>
        <dbReference type="ChEBI" id="CHEBI:79034"/>
    </ligand>
</feature>
<feature type="binding site" evidence="1">
    <location>
        <position position="258"/>
    </location>
    <ligand>
        <name>monacolin J</name>
        <dbReference type="ChEBI" id="CHEBI:79034"/>
    </ligand>
</feature>
<feature type="binding site" evidence="1">
    <location>
        <position position="366"/>
    </location>
    <ligand>
        <name>2-methylbutanoate</name>
        <dbReference type="ChEBI" id="CHEBI:48946"/>
    </ligand>
</feature>
<feature type="binding site" evidence="1">
    <location>
        <position position="388"/>
    </location>
    <ligand>
        <name>monacolin J</name>
        <dbReference type="ChEBI" id="CHEBI:79034"/>
    </ligand>
</feature>
<feature type="binding site" evidence="1">
    <location>
        <position position="390"/>
    </location>
    <ligand>
        <name>monacolin J</name>
        <dbReference type="ChEBI" id="CHEBI:79034"/>
    </ligand>
</feature>
<comment type="function">
    <text evidence="2 3 4 5 6 7 8 9 10 11 12 13 14">Monacolin J acid methylbutanoyltransferase; part of the gene cluster that mediates the biosynthesis of lovastatin (also known as mevinolin, mevacor or monacolin K), a hypolipidemic inhibitor of (3S)-hydroxymethylglutaryl-coenzyme A (HMG-CoA) reductase (HMGR) (PubMed:10334994, PubMed:12929390, PubMed:21495633). The first step in the biosynthesis of lovastatin is the production of dihydromonacolin L acid by the lovastatin nonaketide synthase lovB and the trans-acting enoyl reductase lovC via condensation of one acetyl-CoA unit and 8 malonyl-CoA units (PubMed:10334994, PubMed:10381407, PubMed:19900898, PubMed:22733743). Dihydromonacolin L acid is released from lovB by the thioesterase lovG (PubMed:23653178). Next, dihydromonacolin L acid is oxidized by the dihydromonacolin L monooxygenase lovA twice to form monacolin J acid (PubMed:12929390, PubMed:21495633). The 2-methylbutyrate moiety of lovastatin is synthesized by the lovastatin diketide synthase lovF via condensation of one acetyl-CoA unit and one malonyl-CoA unit (PubMed:19530726, PubMed:21069965). Finally, the covalent attachment of this moiety to monacolin J acid is catalyzed by the transesterase lovD to yield lovastatin (PubMed:10334994, PubMed:17113998, PubMed:18988191, PubMed:19875080, PubMed:24727900). LovD has broad substrate specificity and can also convert monacolin J to simvastatin using alpha-dimethylbutanoyl-S-methyl-3-mercaptopropionate (DMB-S-MMP) as the thioester acyl donor, and can also catalyze the reverse reaction and function as hydrolase in vitro (PubMed:19875080). LovD has much higher activity with LovF-bound 2-methylbutanoate than with free diketide substrates (PubMed:21069965).</text>
</comment>
<comment type="catalytic activity">
    <reaction evidence="6 7 8">
        <text>monacolin J carboxylate + (S)-2-methylbutanoyl-[2-methylbutanoate polyketide synthase] = lovastatin carboxylate + holo-[2-methylbutanoate polyketide synthase]</text>
        <dbReference type="Rhea" id="RHEA:43064"/>
        <dbReference type="Rhea" id="RHEA-COMP:10260"/>
        <dbReference type="Rhea" id="RHEA-COMP:10261"/>
        <dbReference type="ChEBI" id="CHEBI:64479"/>
        <dbReference type="ChEBI" id="CHEBI:79035"/>
        <dbReference type="ChEBI" id="CHEBI:79038"/>
        <dbReference type="ChEBI" id="CHEBI:82764"/>
        <dbReference type="EC" id="2.3.1.238"/>
    </reaction>
</comment>
<comment type="biophysicochemical properties">
    <kinetics>
        <KM evidence="6 8">0.78 mM for monacolin J</KM>
        <KM evidence="6 8">0.67 mM for alpha-dimethylbutanoyl-S-methyl-3-mercaptopropionate</KM>
        <text>kcat is 0.62 min(-1) for simvastatin synthesis.</text>
    </kinetics>
</comment>
<comment type="pathway">
    <text evidence="2 14">Polyketide biosynthesis; lovastatin biosynthesis.</text>
</comment>
<comment type="subunit">
    <text evidence="2 7">Interacts with LovF.</text>
</comment>
<comment type="disruption phenotype">
    <text evidence="2">Loss of lovastatin biosynthesis.</text>
</comment>
<comment type="biotechnology">
    <text evidence="15 16 17">Lovastatin acts as a hypolipidemic agent that works as inhibitor of (3S)-hydroxymethylglutaryl-coenzyme A (HMG-CoA) reductase (HMGR) which reduces HMG-CoA to mevalonate and is the key step in cholesterol biosynthesis (PubMed:6933445). Lovastatin, simvastatin and related compounds are widely used to treat hypercholesteremia and reduce the risk of cardiovascular disease (PubMed:6933445). Furthermore, statins such as lovastatin were found to be anticancer agents (PubMed:29236027, PubMed:29932104).</text>
</comment>
<comment type="miscellaneous">
    <text evidence="21">Directed evolution toward higher catalytic activity with free diketides led to an enzyme with 1000-fold higher activity in simvastatin synthesis, due to numerous mutations that affect protein folding and promote optimal alignment of the residues that are important for substrate binding and catalysis.</text>
</comment>
<comment type="similarity">
    <text evidence="20">Belongs to the class-A beta-lactamase family.</text>
</comment>
<gene>
    <name type="ORF">ATEG_09964</name>
</gene>
<sequence>MGSIIDAAAAADPVVLMETAFRKAVKSRQIPGAVIMARDCSGNLNYTRCFGARTVRRDECNQLPPLQVDTPCRLASATKLLTTIMALQCMERGLVDLDETVDRLLPDLSAMPVLEGFDDAGNARLRERRGKITLRHLLTHTSGLSYVFLHPLLREYMAQGHLQSAEKFGIQSRLAPPAVNDPGAEWIYGANLDWAGKLVERATGLDLEQYLQENICAPLGITDMTFKLQQRPDMLARRADQTHRNSADGRLRYDDSVYFRADGEECFGGQGVFSGPGSYMKVLHSLLKRDGLLLQPQTVDMMFQPALEPRLEEQMNQHMDASPHINYGGPMPMVLRRSFGLGGIIALEDLDGEDWRRKGSLTFGGGPNIVWQIDPKAGLCTLAFFQLEPWNDPVCRDLTRTFEHAIYAQYQQG</sequence>
<accession>Q0C8M0</accession>
<name>LOVD_ASPTN</name>